<reference key="1">
    <citation type="journal article" date="2008" name="Nucleic Acids Res.">
        <title>The complete nucleotide sequences of the five genetically distinct plastid genomes of Oenothera, subsection Oenothera: I. Sequence evaluation and plastome evolution.</title>
        <authorList>
            <person name="Greiner S."/>
            <person name="Wang X."/>
            <person name="Rauwolf U."/>
            <person name="Silber M.V."/>
            <person name="Mayer K."/>
            <person name="Meurer J."/>
            <person name="Haberer G."/>
            <person name="Herrmann R.G."/>
        </authorList>
    </citation>
    <scope>NUCLEOTIDE SEQUENCE [LARGE SCALE GENOMIC DNA]</scope>
    <source>
        <strain>cv. Douthat 1</strain>
    </source>
</reference>
<evidence type="ECO:0000255" key="1">
    <source>
        <dbReference type="HAMAP-Rule" id="MF_00270"/>
    </source>
</evidence>
<evidence type="ECO:0000256" key="2">
    <source>
        <dbReference type="SAM" id="MobiDB-lite"/>
    </source>
</evidence>
<evidence type="ECO:0000305" key="3"/>
<geneLocation type="chloroplast"/>
<keyword id="KW-0150">Chloroplast</keyword>
<keyword id="KW-0934">Plastid</keyword>
<keyword id="KW-0687">Ribonucleoprotein</keyword>
<keyword id="KW-0689">Ribosomal protein</keyword>
<keyword id="KW-0694">RNA-binding</keyword>
<keyword id="KW-0699">rRNA-binding</keyword>
<gene>
    <name evidence="1" type="primary">rps18</name>
</gene>
<organism>
    <name type="scientific">Oenothera argillicola</name>
    <name type="common">Appalachian evening primrose</name>
    <dbReference type="NCBI Taxonomy" id="3940"/>
    <lineage>
        <taxon>Eukaryota</taxon>
        <taxon>Viridiplantae</taxon>
        <taxon>Streptophyta</taxon>
        <taxon>Embryophyta</taxon>
        <taxon>Tracheophyta</taxon>
        <taxon>Spermatophyta</taxon>
        <taxon>Magnoliopsida</taxon>
        <taxon>eudicotyledons</taxon>
        <taxon>Gunneridae</taxon>
        <taxon>Pentapetalae</taxon>
        <taxon>rosids</taxon>
        <taxon>malvids</taxon>
        <taxon>Myrtales</taxon>
        <taxon>Onagraceae</taxon>
        <taxon>Onagroideae</taxon>
        <taxon>Onagreae</taxon>
        <taxon>Oenothera</taxon>
    </lineage>
</organism>
<feature type="chain" id="PRO_0000345598" description="Small ribosomal subunit protein bS18c">
    <location>
        <begin position="1"/>
        <end position="107"/>
    </location>
</feature>
<feature type="region of interest" description="Disordered" evidence="2">
    <location>
        <begin position="85"/>
        <end position="107"/>
    </location>
</feature>
<feature type="compositionally biased region" description="Basic residues" evidence="2">
    <location>
        <begin position="85"/>
        <end position="95"/>
    </location>
</feature>
<proteinExistence type="inferred from homology"/>
<comment type="subunit">
    <text evidence="1">Part of the 30S ribosomal subunit.</text>
</comment>
<comment type="subcellular location">
    <subcellularLocation>
        <location>Plastid</location>
        <location>Chloroplast</location>
    </subcellularLocation>
</comment>
<comment type="similarity">
    <text evidence="1">Belongs to the bacterial ribosomal protein bS18 family.</text>
</comment>
<accession>B0Z4P8</accession>
<dbReference type="EMBL" id="EU262887">
    <property type="protein sequence ID" value="ABW98726.1"/>
    <property type="molecule type" value="Genomic_DNA"/>
</dbReference>
<dbReference type="RefSeq" id="YP_001687159.1">
    <property type="nucleotide sequence ID" value="NC_010358.2"/>
</dbReference>
<dbReference type="SMR" id="B0Z4P8"/>
<dbReference type="GeneID" id="5951909"/>
<dbReference type="GO" id="GO:0009507">
    <property type="term" value="C:chloroplast"/>
    <property type="evidence" value="ECO:0007669"/>
    <property type="project" value="UniProtKB-SubCell"/>
</dbReference>
<dbReference type="GO" id="GO:0005763">
    <property type="term" value="C:mitochondrial small ribosomal subunit"/>
    <property type="evidence" value="ECO:0007669"/>
    <property type="project" value="TreeGrafter"/>
</dbReference>
<dbReference type="GO" id="GO:0070181">
    <property type="term" value="F:small ribosomal subunit rRNA binding"/>
    <property type="evidence" value="ECO:0007669"/>
    <property type="project" value="TreeGrafter"/>
</dbReference>
<dbReference type="GO" id="GO:0003735">
    <property type="term" value="F:structural constituent of ribosome"/>
    <property type="evidence" value="ECO:0007669"/>
    <property type="project" value="InterPro"/>
</dbReference>
<dbReference type="GO" id="GO:0006412">
    <property type="term" value="P:translation"/>
    <property type="evidence" value="ECO:0007669"/>
    <property type="project" value="UniProtKB-UniRule"/>
</dbReference>
<dbReference type="FunFam" id="4.10.640.10:FF:000002">
    <property type="entry name" value="30S ribosomal protein S18, chloroplastic"/>
    <property type="match status" value="1"/>
</dbReference>
<dbReference type="Gene3D" id="4.10.640.10">
    <property type="entry name" value="Ribosomal protein S18"/>
    <property type="match status" value="1"/>
</dbReference>
<dbReference type="HAMAP" id="MF_00270">
    <property type="entry name" value="Ribosomal_bS18"/>
    <property type="match status" value="1"/>
</dbReference>
<dbReference type="InterPro" id="IPR001648">
    <property type="entry name" value="Ribosomal_bS18"/>
</dbReference>
<dbReference type="InterPro" id="IPR036870">
    <property type="entry name" value="Ribosomal_bS18_sf"/>
</dbReference>
<dbReference type="NCBIfam" id="TIGR00165">
    <property type="entry name" value="S18"/>
    <property type="match status" value="1"/>
</dbReference>
<dbReference type="PANTHER" id="PTHR13479">
    <property type="entry name" value="30S RIBOSOMAL PROTEIN S18"/>
    <property type="match status" value="1"/>
</dbReference>
<dbReference type="PANTHER" id="PTHR13479:SF40">
    <property type="entry name" value="SMALL RIBOSOMAL SUBUNIT PROTEIN BS18M"/>
    <property type="match status" value="1"/>
</dbReference>
<dbReference type="Pfam" id="PF01084">
    <property type="entry name" value="Ribosomal_S18"/>
    <property type="match status" value="1"/>
</dbReference>
<dbReference type="PRINTS" id="PR00974">
    <property type="entry name" value="RIBOSOMALS18"/>
</dbReference>
<dbReference type="SUPFAM" id="SSF46911">
    <property type="entry name" value="Ribosomal protein S18"/>
    <property type="match status" value="1"/>
</dbReference>
<name>RR18_OENAR</name>
<sequence>MDKSKRLFLKSKRSFRRRLPPIQSGDRIDYRNISLISRFISQQGKILSRRVNRLTLKQQRLITIAIKQARILSLLPFRPKAQRFKKAQRFKRRQSTARTVGLRTRNK</sequence>
<protein>
    <recommendedName>
        <fullName evidence="1">Small ribosomal subunit protein bS18c</fullName>
    </recommendedName>
    <alternativeName>
        <fullName evidence="3">30S ribosomal protein S18, chloroplastic</fullName>
    </alternativeName>
</protein>